<reference key="1">
    <citation type="journal article" date="2007" name="Nat. Biotechnol.">
        <title>Complete genome sequence of the myxobacterium Sorangium cellulosum.</title>
        <authorList>
            <person name="Schneiker S."/>
            <person name="Perlova O."/>
            <person name="Kaiser O."/>
            <person name="Gerth K."/>
            <person name="Alici A."/>
            <person name="Altmeyer M.O."/>
            <person name="Bartels D."/>
            <person name="Bekel T."/>
            <person name="Beyer S."/>
            <person name="Bode E."/>
            <person name="Bode H.B."/>
            <person name="Bolten C.J."/>
            <person name="Choudhuri J.V."/>
            <person name="Doss S."/>
            <person name="Elnakady Y.A."/>
            <person name="Frank B."/>
            <person name="Gaigalat L."/>
            <person name="Goesmann A."/>
            <person name="Groeger C."/>
            <person name="Gross F."/>
            <person name="Jelsbak L."/>
            <person name="Jelsbak L."/>
            <person name="Kalinowski J."/>
            <person name="Kegler C."/>
            <person name="Knauber T."/>
            <person name="Konietzny S."/>
            <person name="Kopp M."/>
            <person name="Krause L."/>
            <person name="Krug D."/>
            <person name="Linke B."/>
            <person name="Mahmud T."/>
            <person name="Martinez-Arias R."/>
            <person name="McHardy A.C."/>
            <person name="Merai M."/>
            <person name="Meyer F."/>
            <person name="Mormann S."/>
            <person name="Munoz-Dorado J."/>
            <person name="Perez J."/>
            <person name="Pradella S."/>
            <person name="Rachid S."/>
            <person name="Raddatz G."/>
            <person name="Rosenau F."/>
            <person name="Rueckert C."/>
            <person name="Sasse F."/>
            <person name="Scharfe M."/>
            <person name="Schuster S.C."/>
            <person name="Suen G."/>
            <person name="Treuner-Lange A."/>
            <person name="Velicer G.J."/>
            <person name="Vorholter F.-J."/>
            <person name="Weissman K.J."/>
            <person name="Welch R.D."/>
            <person name="Wenzel S.C."/>
            <person name="Whitworth D.E."/>
            <person name="Wilhelm S."/>
            <person name="Wittmann C."/>
            <person name="Bloecker H."/>
            <person name="Puehler A."/>
            <person name="Mueller R."/>
        </authorList>
    </citation>
    <scope>NUCLEOTIDE SEQUENCE [LARGE SCALE GENOMIC DNA]</scope>
    <source>
        <strain>So ce56</strain>
    </source>
</reference>
<gene>
    <name evidence="1" type="primary">nuoN2</name>
    <name type="ordered locus">sce7609</name>
</gene>
<name>NUON2_SORC5</name>
<protein>
    <recommendedName>
        <fullName evidence="1">NADH-quinone oxidoreductase subunit N 2</fullName>
        <ecNumber evidence="1">7.1.1.-</ecNumber>
    </recommendedName>
    <alternativeName>
        <fullName evidence="1">NADH dehydrogenase I subunit N 2</fullName>
    </alternativeName>
    <alternativeName>
        <fullName evidence="1">NDH-1 subunit N 2</fullName>
    </alternativeName>
</protein>
<evidence type="ECO:0000255" key="1">
    <source>
        <dbReference type="HAMAP-Rule" id="MF_00445"/>
    </source>
</evidence>
<dbReference type="EC" id="7.1.1.-" evidence="1"/>
<dbReference type="EMBL" id="AM746676">
    <property type="protein sequence ID" value="CAN97778.1"/>
    <property type="molecule type" value="Genomic_DNA"/>
</dbReference>
<dbReference type="RefSeq" id="WP_012240217.1">
    <property type="nucleotide sequence ID" value="NC_010162.1"/>
</dbReference>
<dbReference type="SMR" id="A9F575"/>
<dbReference type="STRING" id="448385.sce7609"/>
<dbReference type="KEGG" id="scl:sce7609"/>
<dbReference type="eggNOG" id="COG1007">
    <property type="taxonomic scope" value="Bacteria"/>
</dbReference>
<dbReference type="HOGENOM" id="CLU_007100_1_3_7"/>
<dbReference type="OrthoDB" id="9805769at2"/>
<dbReference type="BioCyc" id="SCEL448385:SCE_RS38980-MONOMER"/>
<dbReference type="Proteomes" id="UP000002139">
    <property type="component" value="Chromosome"/>
</dbReference>
<dbReference type="GO" id="GO:0005886">
    <property type="term" value="C:plasma membrane"/>
    <property type="evidence" value="ECO:0007669"/>
    <property type="project" value="UniProtKB-SubCell"/>
</dbReference>
<dbReference type="GO" id="GO:0008137">
    <property type="term" value="F:NADH dehydrogenase (ubiquinone) activity"/>
    <property type="evidence" value="ECO:0007669"/>
    <property type="project" value="InterPro"/>
</dbReference>
<dbReference type="GO" id="GO:0050136">
    <property type="term" value="F:NADH:ubiquinone reductase (non-electrogenic) activity"/>
    <property type="evidence" value="ECO:0007669"/>
    <property type="project" value="UniProtKB-UniRule"/>
</dbReference>
<dbReference type="GO" id="GO:0048038">
    <property type="term" value="F:quinone binding"/>
    <property type="evidence" value="ECO:0007669"/>
    <property type="project" value="UniProtKB-KW"/>
</dbReference>
<dbReference type="GO" id="GO:0042773">
    <property type="term" value="P:ATP synthesis coupled electron transport"/>
    <property type="evidence" value="ECO:0007669"/>
    <property type="project" value="InterPro"/>
</dbReference>
<dbReference type="HAMAP" id="MF_00445">
    <property type="entry name" value="NDH1_NuoN_1"/>
    <property type="match status" value="1"/>
</dbReference>
<dbReference type="InterPro" id="IPR010096">
    <property type="entry name" value="NADH-Q_OxRdtase_suN/2"/>
</dbReference>
<dbReference type="InterPro" id="IPR001750">
    <property type="entry name" value="ND/Mrp_TM"/>
</dbReference>
<dbReference type="NCBIfam" id="TIGR01770">
    <property type="entry name" value="NDH_I_N"/>
    <property type="match status" value="1"/>
</dbReference>
<dbReference type="PANTHER" id="PTHR22773">
    <property type="entry name" value="NADH DEHYDROGENASE"/>
    <property type="match status" value="1"/>
</dbReference>
<dbReference type="Pfam" id="PF00361">
    <property type="entry name" value="Proton_antipo_M"/>
    <property type="match status" value="1"/>
</dbReference>
<comment type="function">
    <text evidence="1">NDH-1 shuttles electrons from NADH, via FMN and iron-sulfur (Fe-S) centers, to quinones in the respiratory chain. The immediate electron acceptor for the enzyme in this species is believed to be ubiquinone. Couples the redox reaction to proton translocation (for every two electrons transferred, four hydrogen ions are translocated across the cytoplasmic membrane), and thus conserves the redox energy in a proton gradient.</text>
</comment>
<comment type="catalytic activity">
    <reaction evidence="1">
        <text>a quinone + NADH + 5 H(+)(in) = a quinol + NAD(+) + 4 H(+)(out)</text>
        <dbReference type="Rhea" id="RHEA:57888"/>
        <dbReference type="ChEBI" id="CHEBI:15378"/>
        <dbReference type="ChEBI" id="CHEBI:24646"/>
        <dbReference type="ChEBI" id="CHEBI:57540"/>
        <dbReference type="ChEBI" id="CHEBI:57945"/>
        <dbReference type="ChEBI" id="CHEBI:132124"/>
    </reaction>
</comment>
<comment type="subunit">
    <text evidence="1">NDH-1 is composed of 14 different subunits. Subunits NuoA, H, J, K, L, M, N constitute the membrane sector of the complex.</text>
</comment>
<comment type="subcellular location">
    <subcellularLocation>
        <location evidence="1">Cell inner membrane</location>
        <topology evidence="1">Multi-pass membrane protein</topology>
    </subcellularLocation>
</comment>
<comment type="similarity">
    <text evidence="1">Belongs to the complex I subunit 2 family.</text>
</comment>
<sequence length="506" mass="53565">MEPRTLDNVASLAYFAPELVLIAAALLLVVWDLASPARLKLAGLVILSLAALACSGGLGAYFLATDAAPRALFHGLLAFDRFSNLFRVIFALVTGAIVLFLVPPRAPGIEPELRRDSGELFTLILVLSLGMNLMAASRHLLLIYLSLELVSVISFVLAGFKINDAKSSEAALKYVIFGGVASGIMLYGMSWIFGITASMRLDECAARIAALTAQQGKVPEVVFVGTAFMLAGFGYKISAAPFHMWTPDVYEGAPTPVTAFLSVGPKAAGFAVLIRFFSDALGAGSAPPGVATPWPVLFGCLAMATMTVGNLSALEQENVKRMLAYSSIAHAGYMLLGFSVFSGAGVAAIAFYIVTYCFMNLGAFMVVMAVAEESGGDETFAAFRGLGRRAPLVAAAMAVFLVSLTGLPPTAGFIGKFYLFSALLAAGGAWSWVIAVVGVLNSVISLFYYARLLRTMYLDRSDRTEPTPVRPLLGGTACALAIPTVLLGVYWGPVYDFVARSVSMLR</sequence>
<accession>A9F575</accession>
<feature type="chain" id="PRO_0000391227" description="NADH-quinone oxidoreductase subunit N 2">
    <location>
        <begin position="1"/>
        <end position="506"/>
    </location>
</feature>
<feature type="transmembrane region" description="Helical" evidence="1">
    <location>
        <begin position="11"/>
        <end position="31"/>
    </location>
</feature>
<feature type="transmembrane region" description="Helical" evidence="1">
    <location>
        <begin position="44"/>
        <end position="64"/>
    </location>
</feature>
<feature type="transmembrane region" description="Helical" evidence="1">
    <location>
        <begin position="82"/>
        <end position="102"/>
    </location>
</feature>
<feature type="transmembrane region" description="Helical" evidence="1">
    <location>
        <begin position="117"/>
        <end position="137"/>
    </location>
</feature>
<feature type="transmembrane region" description="Helical" evidence="1">
    <location>
        <begin position="140"/>
        <end position="160"/>
    </location>
</feature>
<feature type="transmembrane region" description="Helical" evidence="1">
    <location>
        <begin position="175"/>
        <end position="195"/>
    </location>
</feature>
<feature type="transmembrane region" description="Helical" evidence="1">
    <location>
        <begin position="222"/>
        <end position="242"/>
    </location>
</feature>
<feature type="transmembrane region" description="Helical" evidence="1">
    <location>
        <begin position="254"/>
        <end position="274"/>
    </location>
</feature>
<feature type="transmembrane region" description="Helical" evidence="1">
    <location>
        <begin position="289"/>
        <end position="309"/>
    </location>
</feature>
<feature type="transmembrane region" description="Helical" evidence="1">
    <location>
        <begin position="323"/>
        <end position="345"/>
    </location>
</feature>
<feature type="transmembrane region" description="Helical" evidence="1">
    <location>
        <begin position="356"/>
        <end position="376"/>
    </location>
</feature>
<feature type="transmembrane region" description="Helical" evidence="1">
    <location>
        <begin position="394"/>
        <end position="414"/>
    </location>
</feature>
<feature type="transmembrane region" description="Helical" evidence="1">
    <location>
        <begin position="419"/>
        <end position="439"/>
    </location>
</feature>
<feature type="transmembrane region" description="Helical" evidence="1">
    <location>
        <begin position="472"/>
        <end position="492"/>
    </location>
</feature>
<keyword id="KW-0997">Cell inner membrane</keyword>
<keyword id="KW-1003">Cell membrane</keyword>
<keyword id="KW-0472">Membrane</keyword>
<keyword id="KW-0520">NAD</keyword>
<keyword id="KW-0874">Quinone</keyword>
<keyword id="KW-1185">Reference proteome</keyword>
<keyword id="KW-1278">Translocase</keyword>
<keyword id="KW-0812">Transmembrane</keyword>
<keyword id="KW-1133">Transmembrane helix</keyword>
<keyword id="KW-0813">Transport</keyword>
<keyword id="KW-0830">Ubiquinone</keyword>
<proteinExistence type="inferred from homology"/>
<organism>
    <name type="scientific">Sorangium cellulosum (strain So ce56)</name>
    <name type="common">Polyangium cellulosum (strain So ce56)</name>
    <dbReference type="NCBI Taxonomy" id="448385"/>
    <lineage>
        <taxon>Bacteria</taxon>
        <taxon>Pseudomonadati</taxon>
        <taxon>Myxococcota</taxon>
        <taxon>Polyangia</taxon>
        <taxon>Polyangiales</taxon>
        <taxon>Polyangiaceae</taxon>
        <taxon>Sorangium</taxon>
    </lineage>
</organism>